<proteinExistence type="inferred from homology"/>
<reference key="1">
    <citation type="submission" date="2006-08" db="EMBL/GenBank/DDBJ databases">
        <title>Positive selection in transcription factor genes on the human lineage.</title>
        <authorList>
            <person name="Nickel G.C."/>
            <person name="Tefft D.L."/>
            <person name="Trevarthen K."/>
            <person name="Funt J."/>
            <person name="Adams M.D."/>
        </authorList>
    </citation>
    <scope>NUCLEOTIDE SEQUENCE [GENOMIC DNA]</scope>
</reference>
<protein>
    <recommendedName>
        <fullName>SCAN domain-containing protein 1</fullName>
    </recommendedName>
</protein>
<dbReference type="EMBL" id="DQ977210">
    <property type="protein sequence ID" value="ABM54256.1"/>
    <property type="molecule type" value="Genomic_DNA"/>
</dbReference>
<dbReference type="SMR" id="A1YG31"/>
<dbReference type="STRING" id="9597.ENSPPAP00000022637"/>
<dbReference type="eggNOG" id="KOG1721">
    <property type="taxonomic scope" value="Eukaryota"/>
</dbReference>
<dbReference type="Proteomes" id="UP000240080">
    <property type="component" value="Unplaced"/>
</dbReference>
<dbReference type="GO" id="GO:0005634">
    <property type="term" value="C:nucleus"/>
    <property type="evidence" value="ECO:0007669"/>
    <property type="project" value="UniProtKB-SubCell"/>
</dbReference>
<dbReference type="CDD" id="cd07936">
    <property type="entry name" value="SCAN"/>
    <property type="match status" value="1"/>
</dbReference>
<dbReference type="FunFam" id="1.10.4020.10:FF:000003">
    <property type="entry name" value="SCAN domain-containing protein 1"/>
    <property type="match status" value="1"/>
</dbReference>
<dbReference type="Gene3D" id="1.10.4020.10">
    <property type="entry name" value="DNA breaking-rejoining enzymes"/>
    <property type="match status" value="1"/>
</dbReference>
<dbReference type="InterPro" id="IPR050916">
    <property type="entry name" value="SCAN-C2H2_zinc_finger"/>
</dbReference>
<dbReference type="InterPro" id="IPR003309">
    <property type="entry name" value="SCAN_dom"/>
</dbReference>
<dbReference type="InterPro" id="IPR038269">
    <property type="entry name" value="SCAN_sf"/>
</dbReference>
<dbReference type="PANTHER" id="PTHR45935">
    <property type="entry name" value="PROTEIN ZBED8-RELATED"/>
    <property type="match status" value="1"/>
</dbReference>
<dbReference type="PANTHER" id="PTHR45935:SF10">
    <property type="entry name" value="SCAN DOMAIN-CONTAINING 1"/>
    <property type="match status" value="1"/>
</dbReference>
<dbReference type="Pfam" id="PF02023">
    <property type="entry name" value="SCAN"/>
    <property type="match status" value="1"/>
</dbReference>
<dbReference type="SMART" id="SM00431">
    <property type="entry name" value="SCAN"/>
    <property type="match status" value="1"/>
</dbReference>
<dbReference type="SUPFAM" id="SSF47353">
    <property type="entry name" value="Retrovirus capsid dimerization domain-like"/>
    <property type="match status" value="1"/>
</dbReference>
<dbReference type="PROSITE" id="PS50804">
    <property type="entry name" value="SCAN_BOX"/>
    <property type="match status" value="1"/>
</dbReference>
<organism>
    <name type="scientific">Pan paniscus</name>
    <name type="common">Pygmy chimpanzee</name>
    <name type="synonym">Bonobo</name>
    <dbReference type="NCBI Taxonomy" id="9597"/>
    <lineage>
        <taxon>Eukaryota</taxon>
        <taxon>Metazoa</taxon>
        <taxon>Chordata</taxon>
        <taxon>Craniata</taxon>
        <taxon>Vertebrata</taxon>
        <taxon>Euteleostomi</taxon>
        <taxon>Mammalia</taxon>
        <taxon>Eutheria</taxon>
        <taxon>Euarchontoglires</taxon>
        <taxon>Primates</taxon>
        <taxon>Haplorrhini</taxon>
        <taxon>Catarrhini</taxon>
        <taxon>Hominidae</taxon>
        <taxon>Pan</taxon>
    </lineage>
</organism>
<accession>A1YG31</accession>
<name>SCND1_PANPA</name>
<feature type="chain" id="PRO_0000285507" description="SCAN domain-containing protein 1">
    <location>
        <begin position="1"/>
        <end position="179"/>
    </location>
</feature>
<feature type="domain" description="SCAN box" evidence="2">
    <location>
        <begin position="108"/>
        <end position="166"/>
    </location>
</feature>
<feature type="region of interest" description="Disordered" evidence="3">
    <location>
        <begin position="1"/>
        <end position="107"/>
    </location>
</feature>
<feature type="compositionally biased region" description="Low complexity" evidence="3">
    <location>
        <begin position="52"/>
        <end position="80"/>
    </location>
</feature>
<sequence>MAATEPILATTGSPAAVPPEKLEGTGSSSAPERNCVGSSLPEASPPAPEPSSPNAAVPEAIPTPRAAASAALELPLGPAPVSVAPQAEAEARSTPGPAGSRLGPETFRQRFRQFRYQDAAGPREAFRQLRELSRQWLRPDIRTKEQIVEMLVQEQLLAILPEAARARRIRRRTDVRITG</sequence>
<evidence type="ECO:0000250" key="1"/>
<evidence type="ECO:0000255" key="2">
    <source>
        <dbReference type="PROSITE-ProRule" id="PRU00187"/>
    </source>
</evidence>
<evidence type="ECO:0000256" key="3">
    <source>
        <dbReference type="SAM" id="MobiDB-lite"/>
    </source>
</evidence>
<keyword id="KW-0539">Nucleus</keyword>
<keyword id="KW-1185">Reference proteome</keyword>
<gene>
    <name type="primary">SCAND1</name>
</gene>
<comment type="function">
    <text evidence="1">May regulate transcriptional activity.</text>
</comment>
<comment type="subunit">
    <text evidence="1">Interacts with ZNF202.</text>
</comment>
<comment type="subcellular location">
    <subcellularLocation>
        <location evidence="2">Nucleus</location>
    </subcellularLocation>
</comment>